<name>MCE_MIMIV</name>
<dbReference type="EC" id="3.6.1.74"/>
<dbReference type="EC" id="2.7.7.50"/>
<dbReference type="EC" id="2.1.1.56"/>
<dbReference type="EMBL" id="AY653733">
    <property type="protein sequence ID" value="AAV50651.1"/>
    <property type="molecule type" value="Genomic_DNA"/>
</dbReference>
<dbReference type="PDB" id="2QY2">
    <property type="method" value="X-ray"/>
    <property type="resolution" value="2.00 A"/>
    <property type="chains" value="A/B=1-237"/>
</dbReference>
<dbReference type="PDB" id="2QZE">
    <property type="method" value="X-ray"/>
    <property type="resolution" value="2.90 A"/>
    <property type="chains" value="A/B=1-237"/>
</dbReference>
<dbReference type="PDB" id="3BGY">
    <property type="method" value="X-ray"/>
    <property type="resolution" value="1.65 A"/>
    <property type="chains" value="A/B=1-237"/>
</dbReference>
<dbReference type="PDBsum" id="2QY2"/>
<dbReference type="PDBsum" id="2QZE"/>
<dbReference type="PDBsum" id="3BGY"/>
<dbReference type="SMR" id="Q5UQX1"/>
<dbReference type="KEGG" id="vg:9925004"/>
<dbReference type="OrthoDB" id="544at10239"/>
<dbReference type="BRENDA" id="2.7.7.50">
    <property type="organism ID" value="9231"/>
</dbReference>
<dbReference type="UniPathway" id="UPA00922"/>
<dbReference type="EvolutionaryTrace" id="Q5UQX1"/>
<dbReference type="Proteomes" id="UP000001134">
    <property type="component" value="Genome"/>
</dbReference>
<dbReference type="GO" id="GO:0044423">
    <property type="term" value="C:virion component"/>
    <property type="evidence" value="ECO:0007669"/>
    <property type="project" value="UniProtKB-KW"/>
</dbReference>
<dbReference type="GO" id="GO:0005525">
    <property type="term" value="F:GTP binding"/>
    <property type="evidence" value="ECO:0007669"/>
    <property type="project" value="UniProtKB-KW"/>
</dbReference>
<dbReference type="GO" id="GO:0004482">
    <property type="term" value="F:mRNA 5'-cap (guanine-N7-)-methyltransferase activity"/>
    <property type="evidence" value="ECO:0007669"/>
    <property type="project" value="UniProtKB-EC"/>
</dbReference>
<dbReference type="GO" id="GO:0140818">
    <property type="term" value="F:mRNA 5'-triphosphate monophosphatase activity"/>
    <property type="evidence" value="ECO:0007669"/>
    <property type="project" value="RHEA"/>
</dbReference>
<dbReference type="GO" id="GO:0004484">
    <property type="term" value="F:mRNA guanylyltransferase activity"/>
    <property type="evidence" value="ECO:0007669"/>
    <property type="project" value="UniProtKB-EC"/>
</dbReference>
<dbReference type="GO" id="GO:0004651">
    <property type="term" value="F:polynucleotide 5'-phosphatase activity"/>
    <property type="evidence" value="ECO:0007669"/>
    <property type="project" value="UniProtKB-EC"/>
</dbReference>
<dbReference type="GO" id="GO:0003723">
    <property type="term" value="F:RNA binding"/>
    <property type="evidence" value="ECO:0007669"/>
    <property type="project" value="UniProtKB-KW"/>
</dbReference>
<dbReference type="CDD" id="cd02440">
    <property type="entry name" value="AdoMet_MTases"/>
    <property type="match status" value="1"/>
</dbReference>
<dbReference type="CDD" id="cd07470">
    <property type="entry name" value="CYTH-like_mRNA_RTPase"/>
    <property type="match status" value="1"/>
</dbReference>
<dbReference type="Gene3D" id="3.30.470.30">
    <property type="entry name" value="DNA ligase/mRNA capping enzyme"/>
    <property type="match status" value="1"/>
</dbReference>
<dbReference type="Gene3D" id="3.20.100.10">
    <property type="entry name" value="mRNA triphosphatase Cet1-like"/>
    <property type="match status" value="1"/>
</dbReference>
<dbReference type="Gene3D" id="2.40.50.140">
    <property type="entry name" value="Nucleic acid-binding proteins"/>
    <property type="match status" value="1"/>
</dbReference>
<dbReference type="Gene3D" id="3.40.50.150">
    <property type="entry name" value="Vaccinia Virus protein VP39"/>
    <property type="match status" value="1"/>
</dbReference>
<dbReference type="InterPro" id="IPR033469">
    <property type="entry name" value="CYTH-like_dom_sf"/>
</dbReference>
<dbReference type="InterPro" id="IPR004971">
    <property type="entry name" value="mRNA_G-N7_MeTrfase_dom"/>
</dbReference>
<dbReference type="InterPro" id="IPR004206">
    <property type="entry name" value="mRNA_triPase_Cet1"/>
</dbReference>
<dbReference type="InterPro" id="IPR037009">
    <property type="entry name" value="mRNA_triPase_Cet1_sf"/>
</dbReference>
<dbReference type="InterPro" id="IPR012340">
    <property type="entry name" value="NA-bd_OB-fold"/>
</dbReference>
<dbReference type="InterPro" id="IPR039753">
    <property type="entry name" value="RG7MT1"/>
</dbReference>
<dbReference type="InterPro" id="IPR029063">
    <property type="entry name" value="SAM-dependent_MTases_sf"/>
</dbReference>
<dbReference type="PANTHER" id="PTHR12189:SF2">
    <property type="entry name" value="MRNA CAP GUANINE-N7 METHYLTRANSFERASE"/>
    <property type="match status" value="1"/>
</dbReference>
<dbReference type="PANTHER" id="PTHR12189">
    <property type="entry name" value="MRNA GUANINE-7- METHYLTRANSFERASE"/>
    <property type="match status" value="1"/>
</dbReference>
<dbReference type="Pfam" id="PF03291">
    <property type="entry name" value="mRNA_G-N7_MeTrfase"/>
    <property type="match status" value="1"/>
</dbReference>
<dbReference type="SUPFAM" id="SSF55154">
    <property type="entry name" value="CYTH-like phosphatases"/>
    <property type="match status" value="1"/>
</dbReference>
<dbReference type="SUPFAM" id="SSF56091">
    <property type="entry name" value="DNA ligase/mRNA capping enzyme, catalytic domain"/>
    <property type="match status" value="1"/>
</dbReference>
<dbReference type="SUPFAM" id="SSF50249">
    <property type="entry name" value="Nucleic acid-binding proteins"/>
    <property type="match status" value="1"/>
</dbReference>
<dbReference type="SUPFAM" id="SSF53335">
    <property type="entry name" value="S-adenosyl-L-methionine-dependent methyltransferases"/>
    <property type="match status" value="1"/>
</dbReference>
<dbReference type="PROSITE" id="PS51562">
    <property type="entry name" value="RNA_CAP0_MT"/>
    <property type="match status" value="1"/>
</dbReference>
<proteinExistence type="evidence at protein level"/>
<reference key="1">
    <citation type="journal article" date="2004" name="Science">
        <title>The 1.2-megabase genome sequence of Mimivirus.</title>
        <authorList>
            <person name="Raoult D."/>
            <person name="Audic S."/>
            <person name="Robert C."/>
            <person name="Abergel C."/>
            <person name="Renesto P."/>
            <person name="Ogata H."/>
            <person name="La Scola B."/>
            <person name="Susan M."/>
            <person name="Claverie J.-M."/>
        </authorList>
    </citation>
    <scope>NUCLEOTIDE SEQUENCE [LARGE SCALE GENOMIC DNA]</scope>
    <source>
        <strain>Rowbotham-Bradford</strain>
    </source>
</reference>
<reference key="2">
    <citation type="journal article" date="2006" name="J. Virol.">
        <title>Mimivirus giant particles incorporate a large fraction of anonymous and unique gene products.</title>
        <authorList>
            <person name="Renesto P."/>
            <person name="Abergel C."/>
            <person name="Decloquement P."/>
            <person name="Moinier D."/>
            <person name="Azza S."/>
            <person name="Ogata H."/>
            <person name="Fourquet P."/>
            <person name="Gorvel J.-P."/>
            <person name="Claverie J.-M."/>
            <person name="Raoult D."/>
        </authorList>
    </citation>
    <scope>IDENTIFICATION BY MASS SPECTROMETRY [LARGE SCALE ANALYSIS]</scope>
    <scope>SUBCELLULAR LOCATION</scope>
</reference>
<protein>
    <recommendedName>
        <fullName>Probable mRNA-capping enzyme</fullName>
    </recommendedName>
    <domain>
        <recommendedName>
            <fullName>Polynucleotide 5'-triphosphatase</fullName>
            <ecNumber>3.6.1.74</ecNumber>
        </recommendedName>
        <alternativeName>
            <fullName>mRNA 5'-triphosphatase</fullName>
            <shortName>TPase</shortName>
        </alternativeName>
    </domain>
    <domain>
        <recommendedName>
            <fullName>mRNA guanylyltransferase</fullName>
            <ecNumber>2.7.7.50</ecNumber>
        </recommendedName>
        <alternativeName>
            <fullName>GTP--RNA guanylyltransferase</fullName>
            <shortName>GTase</shortName>
        </alternativeName>
    </domain>
    <domain>
        <recommendedName>
            <fullName>mRNA (guanine-N(7))-methyltransferase</fullName>
            <ecNumber>2.1.1.56</ecNumber>
        </recommendedName>
    </domain>
</protein>
<organism>
    <name type="scientific">Acanthamoeba polyphaga mimivirus</name>
    <name type="common">APMV</name>
    <dbReference type="NCBI Taxonomy" id="212035"/>
    <lineage>
        <taxon>Viruses</taxon>
        <taxon>Varidnaviria</taxon>
        <taxon>Bamfordvirae</taxon>
        <taxon>Nucleocytoviricota</taxon>
        <taxon>Megaviricetes</taxon>
        <taxon>Imitervirales</taxon>
        <taxon>Mimiviridae</taxon>
        <taxon>Megamimivirinae</taxon>
        <taxon>Mimivirus</taxon>
        <taxon>Mimivirus bradfordmassiliense</taxon>
    </lineage>
</organism>
<feature type="chain" id="PRO_0000210133" description="Probable mRNA-capping enzyme">
    <location>
        <begin position="1"/>
        <end position="1170"/>
    </location>
</feature>
<feature type="domain" description="mRNA cap 0 methyltransferase" evidence="3">
    <location>
        <begin position="684"/>
        <end position="1007"/>
    </location>
</feature>
<feature type="active site" description="N6-GMP-lysine intermediate" evidence="2">
    <location>
        <position position="292"/>
    </location>
</feature>
<feature type="binding site" evidence="3">
    <location>
        <begin position="693"/>
        <end position="694"/>
    </location>
    <ligand>
        <name>mRNA</name>
        <dbReference type="ChEBI" id="CHEBI:33699"/>
    </ligand>
    <ligandPart>
        <name>mRNA cap</name>
    </ligandPart>
</feature>
<feature type="binding site" evidence="3">
    <location>
        <position position="697"/>
    </location>
    <ligand>
        <name>S-adenosyl-L-methionine</name>
        <dbReference type="ChEBI" id="CHEBI:59789"/>
    </ligand>
</feature>
<feature type="binding site" evidence="3">
    <location>
        <position position="715"/>
    </location>
    <ligand>
        <name>S-adenosyl-L-methionine</name>
        <dbReference type="ChEBI" id="CHEBI:59789"/>
    </ligand>
</feature>
<feature type="binding site" evidence="3">
    <location>
        <position position="737"/>
    </location>
    <ligand>
        <name>S-adenosyl-L-methionine</name>
        <dbReference type="ChEBI" id="CHEBI:59789"/>
    </ligand>
</feature>
<feature type="binding site" evidence="3">
    <location>
        <begin position="813"/>
        <end position="815"/>
    </location>
    <ligand>
        <name>S-adenosyl-L-methionine</name>
        <dbReference type="ChEBI" id="CHEBI:59789"/>
    </ligand>
</feature>
<feature type="site" description="mRNA cap binding" evidence="3">
    <location>
        <position position="724"/>
    </location>
</feature>
<feature type="site" description="mRNA cap binding" evidence="3">
    <location>
        <position position="753"/>
    </location>
</feature>
<feature type="site" description="mRNA cap binding" evidence="3">
    <location>
        <position position="817"/>
    </location>
</feature>
<feature type="site" description="mRNA cap binding" evidence="3">
    <location>
        <position position="912"/>
    </location>
</feature>
<feature type="helix" evidence="6">
    <location>
        <begin position="17"/>
        <end position="32"/>
    </location>
</feature>
<feature type="strand" evidence="6">
    <location>
        <begin position="34"/>
        <end position="42"/>
    </location>
</feature>
<feature type="helix" evidence="6">
    <location>
        <begin position="47"/>
        <end position="60"/>
    </location>
</feature>
<feature type="helix" evidence="6">
    <location>
        <begin position="63"/>
        <end position="65"/>
    </location>
</feature>
<feature type="strand" evidence="6">
    <location>
        <begin position="66"/>
        <end position="77"/>
    </location>
</feature>
<feature type="strand" evidence="6">
    <location>
        <begin position="83"/>
        <end position="88"/>
    </location>
</feature>
<feature type="helix" evidence="6">
    <location>
        <begin position="91"/>
        <end position="101"/>
    </location>
</feature>
<feature type="helix" evidence="6">
    <location>
        <begin position="106"/>
        <end position="115"/>
    </location>
</feature>
<feature type="strand" evidence="6">
    <location>
        <begin position="122"/>
        <end position="136"/>
    </location>
</feature>
<feature type="strand" evidence="6">
    <location>
        <begin position="140"/>
        <end position="152"/>
    </location>
</feature>
<feature type="strand" evidence="6">
    <location>
        <begin position="154"/>
        <end position="156"/>
    </location>
</feature>
<feature type="strand" evidence="6">
    <location>
        <begin position="169"/>
        <end position="183"/>
    </location>
</feature>
<feature type="strand" evidence="6">
    <location>
        <begin position="186"/>
        <end position="199"/>
    </location>
</feature>
<feature type="helix" evidence="6">
    <location>
        <begin position="202"/>
        <end position="204"/>
    </location>
</feature>
<feature type="strand" evidence="6">
    <location>
        <begin position="208"/>
        <end position="217"/>
    </location>
</feature>
<feature type="helix" evidence="6">
    <location>
        <begin position="221"/>
        <end position="235"/>
    </location>
</feature>
<evidence type="ECO:0000250" key="1">
    <source>
        <dbReference type="UniProtKB" id="P04298"/>
    </source>
</evidence>
<evidence type="ECO:0000255" key="2"/>
<evidence type="ECO:0000255" key="3">
    <source>
        <dbReference type="PROSITE-ProRule" id="PRU00895"/>
    </source>
</evidence>
<evidence type="ECO:0000269" key="4">
    <source>
    </source>
</evidence>
<evidence type="ECO:0000305" key="5"/>
<evidence type="ECO:0007829" key="6">
    <source>
        <dbReference type="PDB" id="3BGY"/>
    </source>
</evidence>
<accession>Q5UQX1</accession>
<comment type="function">
    <text>Responsible for methylating the 5'-cap structure of mRNAs.</text>
</comment>
<comment type="catalytic activity">
    <reaction evidence="1">
        <text>a 5'-end triphospho-ribonucleoside in mRNA + H2O = a 5'-end diphospho-ribonucleoside in mRNA + phosphate + H(+)</text>
        <dbReference type="Rhea" id="RHEA:67004"/>
        <dbReference type="Rhea" id="RHEA-COMP:17164"/>
        <dbReference type="Rhea" id="RHEA-COMP:17165"/>
        <dbReference type="ChEBI" id="CHEBI:15377"/>
        <dbReference type="ChEBI" id="CHEBI:15378"/>
        <dbReference type="ChEBI" id="CHEBI:43474"/>
        <dbReference type="ChEBI" id="CHEBI:167616"/>
        <dbReference type="ChEBI" id="CHEBI:167618"/>
        <dbReference type="EC" id="3.6.1.74"/>
    </reaction>
    <physiologicalReaction direction="left-to-right" evidence="1">
        <dbReference type="Rhea" id="RHEA:67005"/>
    </physiologicalReaction>
</comment>
<comment type="catalytic activity">
    <reaction>
        <text>a 5'-end diphospho-ribonucleoside in mRNA + GTP + H(+) = a 5'-end (5'-triphosphoguanosine)-ribonucleoside in mRNA + diphosphate</text>
        <dbReference type="Rhea" id="RHEA:67012"/>
        <dbReference type="Rhea" id="RHEA-COMP:17165"/>
        <dbReference type="Rhea" id="RHEA-COMP:17166"/>
        <dbReference type="ChEBI" id="CHEBI:15378"/>
        <dbReference type="ChEBI" id="CHEBI:33019"/>
        <dbReference type="ChEBI" id="CHEBI:37565"/>
        <dbReference type="ChEBI" id="CHEBI:167616"/>
        <dbReference type="ChEBI" id="CHEBI:167617"/>
        <dbReference type="EC" id="2.7.7.50"/>
    </reaction>
</comment>
<comment type="catalytic activity">
    <reaction evidence="3">
        <text>a 5'-end (5'-triphosphoguanosine)-ribonucleoside in mRNA + S-adenosyl-L-methionine = a 5'-end (N(7)-methyl 5'-triphosphoguanosine)-ribonucleoside in mRNA + S-adenosyl-L-homocysteine</text>
        <dbReference type="Rhea" id="RHEA:67008"/>
        <dbReference type="Rhea" id="RHEA-COMP:17166"/>
        <dbReference type="Rhea" id="RHEA-COMP:17167"/>
        <dbReference type="ChEBI" id="CHEBI:57856"/>
        <dbReference type="ChEBI" id="CHEBI:59789"/>
        <dbReference type="ChEBI" id="CHEBI:156461"/>
        <dbReference type="ChEBI" id="CHEBI:167617"/>
        <dbReference type="EC" id="2.1.1.56"/>
    </reaction>
</comment>
<comment type="pathway">
    <text>mRNA processing; mRNA capping.</text>
</comment>
<comment type="subcellular location">
    <subcellularLocation>
        <location evidence="4">Virion</location>
    </subcellularLocation>
</comment>
<comment type="similarity">
    <text evidence="5">In the N-terminal section; belongs to the dsDNA virus mRNA guanylyltransferase family.</text>
</comment>
<comment type="similarity">
    <text evidence="3">In the C-terminal section; belongs to the class I-like SAM-binding methyltransferase superfamily. mRNA cap 0 methyltransferase family.</text>
</comment>
<sequence length="1170" mass="136508">MGTKLKKSNNDITIFSENEYNEIVEMLRDYSNGDNLEFEVSFKNINYPNFMRITEHYINITPENKIESNNYLDISLIFPDKNVYRVSLFNQEQIGEFITKFSKASSNDISRYIVSLDPSDDIEIVYKNRGSGKLIGIDNWAITIKSTEEIPLVAGKSKISKPKITGSERIMYRYKTRYSFTINKNSRIDITDVKSSPIIWKLMTVPSNYELELELINKIDINTLESELLNVFMIIQDTKIPISKAESDTVVEEYRNLLNVRQTNNLDSRNVISVNSNHIINFIPNRYAVTDKADGERYFLFSLNSGIYLLSINLTVKKLNIPVLEKRYQNMLIDGEYIKTTGHDLFMVFDVIFAEGTDYRYDNTYSLPKRIIIINNIIDKCFGNLIPFNDYTDKHNNLELDSIKTYYKSELSNYWKNFKNRLNKSTDLFITRKLYLVPYGIDSSEIFMYADMIWKLYVYNELTPYQLDGIIYTPINSPYLIRGGIDAYDTIPMEYKWKPPSQNSIDFYIRFKKDVSGADAVYYDNSVERAEGKPYKICLLYVGLNKQGQEIPIQFKVNGVEQTANIYTKDGEATDINGNAINDNTVVEFVFDTLKIDMDDSYKWIPIRTRYDKTESVQKYHKRYGNNLQIANRIWKTITNPITEDIISSLGDPTTFNKEITLLSDFRDTKYNKQALTYYQKNTSNAAGMRAFNNWIKSNMITTYCRDGSKVLDIGCGRGGDLIKFINAGVEFYVGIDIDNNGLYVINDSANNRYKNLKKTIQNIPPMYFINADARGLFTLEAQEKILPGMPDFNKSLINKYLVGNKYDTINCQFTIHYYLSDELSWNNFCKNINNQLKDNGYLLITSFDGNLIHNKLKGKQKLSSSYTDNRGNKNIFFEINKIYSDTDKVGLGMAIDLYNSLISNPGTYIREYLVFPEFLEKSLKEKCGLELVESDLFYNIFNTYKNYFKKTYNEYGMTDVSSKKHSEIREFYLSLEGNANNDIEIDIARASFKLAMLNRYYVFRKTSTINITEPSRIVNELNNRIDLGKFIMPYFRTNNMFIDLDNVDTDINRVYRNIRNKYRTTRPHVYLIKHNINENRLEDIYLSNNKLDFSKIKNGSDPKVLLIYKSPDKQFYPLYYQNYQSMPFDLDQIYLPDKKKYLLDSDRIINDLNILINLTEKIKNIPQLS</sequence>
<organismHost>
    <name type="scientific">Acanthamoeba polyphaga</name>
    <name type="common">Amoeba</name>
    <dbReference type="NCBI Taxonomy" id="5757"/>
</organismHost>
<keyword id="KW-0002">3D-structure</keyword>
<keyword id="KW-0342">GTP-binding</keyword>
<keyword id="KW-0378">Hydrolase</keyword>
<keyword id="KW-0489">Methyltransferase</keyword>
<keyword id="KW-0506">mRNA capping</keyword>
<keyword id="KW-0507">mRNA processing</keyword>
<keyword id="KW-0511">Multifunctional enzyme</keyword>
<keyword id="KW-0547">Nucleotide-binding</keyword>
<keyword id="KW-0548">Nucleotidyltransferase</keyword>
<keyword id="KW-1185">Reference proteome</keyword>
<keyword id="KW-0694">RNA-binding</keyword>
<keyword id="KW-0949">S-adenosyl-L-methionine</keyword>
<keyword id="KW-0808">Transferase</keyword>
<keyword id="KW-0946">Virion</keyword>
<gene>
    <name type="ordered locus">MIMI_R382</name>
</gene>